<feature type="chain" id="PRO_1000192409" description="Glycerol-3-phosphate acyltransferase">
    <location>
        <begin position="1"/>
        <end position="807"/>
    </location>
</feature>
<feature type="short sequence motif" description="HXXXXD motif">
    <location>
        <begin position="308"/>
        <end position="313"/>
    </location>
</feature>
<keyword id="KW-0012">Acyltransferase</keyword>
<keyword id="KW-0997">Cell inner membrane</keyword>
<keyword id="KW-1003">Cell membrane</keyword>
<keyword id="KW-0444">Lipid biosynthesis</keyword>
<keyword id="KW-0443">Lipid metabolism</keyword>
<keyword id="KW-0472">Membrane</keyword>
<keyword id="KW-0594">Phospholipid biosynthesis</keyword>
<keyword id="KW-1208">Phospholipid metabolism</keyword>
<keyword id="KW-0808">Transferase</keyword>
<accession>B8ECL8</accession>
<comment type="catalytic activity">
    <reaction evidence="1">
        <text>sn-glycerol 3-phosphate + an acyl-CoA = a 1-acyl-sn-glycero-3-phosphate + CoA</text>
        <dbReference type="Rhea" id="RHEA:15325"/>
        <dbReference type="ChEBI" id="CHEBI:57287"/>
        <dbReference type="ChEBI" id="CHEBI:57597"/>
        <dbReference type="ChEBI" id="CHEBI:57970"/>
        <dbReference type="ChEBI" id="CHEBI:58342"/>
        <dbReference type="EC" id="2.3.1.15"/>
    </reaction>
</comment>
<comment type="pathway">
    <text evidence="1">Phospholipid metabolism; CDP-diacylglycerol biosynthesis; CDP-diacylglycerol from sn-glycerol 3-phosphate: step 1/3.</text>
</comment>
<comment type="subcellular location">
    <subcellularLocation>
        <location evidence="1">Cell inner membrane</location>
        <topology evidence="1">Peripheral membrane protein</topology>
        <orientation evidence="1">Cytoplasmic side</orientation>
    </subcellularLocation>
</comment>
<comment type="domain">
    <text evidence="1">The HXXXXD motif is essential for acyltransferase activity and may constitute the binding site for the phosphate moiety of the glycerol-3-phosphate.</text>
</comment>
<comment type="similarity">
    <text evidence="1">Belongs to the GPAT/DAPAT family.</text>
</comment>
<reference key="1">
    <citation type="submission" date="2008-12" db="EMBL/GenBank/DDBJ databases">
        <title>Complete sequence of chromosome of Shewanella baltica OS223.</title>
        <authorList>
            <consortium name="US DOE Joint Genome Institute"/>
            <person name="Lucas S."/>
            <person name="Copeland A."/>
            <person name="Lapidus A."/>
            <person name="Glavina del Rio T."/>
            <person name="Dalin E."/>
            <person name="Tice H."/>
            <person name="Bruce D."/>
            <person name="Goodwin L."/>
            <person name="Pitluck S."/>
            <person name="Chertkov O."/>
            <person name="Meincke L."/>
            <person name="Brettin T."/>
            <person name="Detter J.C."/>
            <person name="Han C."/>
            <person name="Kuske C.R."/>
            <person name="Larimer F."/>
            <person name="Land M."/>
            <person name="Hauser L."/>
            <person name="Kyrpides N."/>
            <person name="Ovchinnikova G."/>
            <person name="Brettar I."/>
            <person name="Rodrigues J."/>
            <person name="Konstantinidis K."/>
            <person name="Tiedje J."/>
        </authorList>
    </citation>
    <scope>NUCLEOTIDE SEQUENCE [LARGE SCALE GENOMIC DNA]</scope>
    <source>
        <strain>OS223</strain>
    </source>
</reference>
<gene>
    <name evidence="1" type="primary">plsB</name>
    <name type="ordered locus">Sbal223_4109</name>
</gene>
<sequence length="807" mass="91306">MPKHDSLWLKSLRWIQKHLVHTIVVPQDPFADLNLDAFRPLAYVMKTESLSDIAALSEITAKLGLPSPYEPLVANGVIAPRVVCLQGRKPLFGERAGNEPFLECFMRLLAVHKERPELDIQLVPVSLYWGRTPGKEDDTMKAAVFERENPTWLRKCLMILFLGRHNFVQFSNAVSLRYMADEHGTDMGIAHKLARVARVHFRRQRKVMTGPVLPNRQALFHSLLKSESLRKAIQEEAANKKISETQARETAIEYLDEIAADYSDSLVRIAERFLTWLWNKLYSGINIKGAEQVRQLHHDGHEIVYVPCHRSHMDYLLLSYILYYQGMVPPHIAAGINLNFWPAGPMFRRGGAFFIRRSFNGNKLYTAVFREYLDQLFAKGYSVEYFSEGGRSRTGRLLAPKTGMIAMTMNSVLRGIERPVTLVPVYLGYDHVMEVATYHKELSGKKKKKESVWQVFGAIRKLGNFGQGYVNFGEPITLQNFLNERAPNWRTELADDPEQKPSWLTPAVNVLANRVMTNINDAAAASSVTLTSLVLLATDQNALERSLLERQLDLYLTLLKKVPYTTYTSVAEGDGKHLVQQGLELNKFVVCADPLGEIVSIEASQAVSMTYYRNNIIHLFIVPSLIASCLTHNEQIPRQQVVSIVADFYPLLKAELFMGIKDVPAYVNQVLDFFIEQGLVVETDTLTVVPEHTSQLLLLASSVSETLQRYAIIFNLLANRPKMERSELESESHLLAQRLGALHGITAPEFYDKKLYGTLSVKLKELGYLADNQDKSNINRIRDQANSLLRPSVKQTIVASVTAEHTV</sequence>
<dbReference type="EC" id="2.3.1.15" evidence="1"/>
<dbReference type="EMBL" id="CP001252">
    <property type="protein sequence ID" value="ACK48580.1"/>
    <property type="molecule type" value="Genomic_DNA"/>
</dbReference>
<dbReference type="RefSeq" id="WP_012588834.1">
    <property type="nucleotide sequence ID" value="NC_011663.1"/>
</dbReference>
<dbReference type="SMR" id="B8ECL8"/>
<dbReference type="KEGG" id="sbp:Sbal223_4109"/>
<dbReference type="HOGENOM" id="CLU_015407_0_0_6"/>
<dbReference type="UniPathway" id="UPA00557">
    <property type="reaction ID" value="UER00612"/>
</dbReference>
<dbReference type="Proteomes" id="UP000002507">
    <property type="component" value="Chromosome"/>
</dbReference>
<dbReference type="GO" id="GO:0005886">
    <property type="term" value="C:plasma membrane"/>
    <property type="evidence" value="ECO:0007669"/>
    <property type="project" value="UniProtKB-SubCell"/>
</dbReference>
<dbReference type="GO" id="GO:0004366">
    <property type="term" value="F:glycerol-3-phosphate O-acyltransferase activity"/>
    <property type="evidence" value="ECO:0007669"/>
    <property type="project" value="UniProtKB-UniRule"/>
</dbReference>
<dbReference type="GO" id="GO:0016024">
    <property type="term" value="P:CDP-diacylglycerol biosynthetic process"/>
    <property type="evidence" value="ECO:0007669"/>
    <property type="project" value="UniProtKB-UniRule"/>
</dbReference>
<dbReference type="GO" id="GO:0006631">
    <property type="term" value="P:fatty acid metabolic process"/>
    <property type="evidence" value="ECO:0007669"/>
    <property type="project" value="TreeGrafter"/>
</dbReference>
<dbReference type="CDD" id="cd07993">
    <property type="entry name" value="LPLAT_DHAPAT-like"/>
    <property type="match status" value="1"/>
</dbReference>
<dbReference type="HAMAP" id="MF_00393">
    <property type="entry name" value="Glyc3P_acyltrans"/>
    <property type="match status" value="1"/>
</dbReference>
<dbReference type="InterPro" id="IPR022284">
    <property type="entry name" value="GPAT/DHAPAT"/>
</dbReference>
<dbReference type="InterPro" id="IPR045520">
    <property type="entry name" value="GPAT/DHAPAT_C"/>
</dbReference>
<dbReference type="InterPro" id="IPR041728">
    <property type="entry name" value="GPAT/DHAPAT_LPLAT"/>
</dbReference>
<dbReference type="InterPro" id="IPR028354">
    <property type="entry name" value="GPAT_PlsB"/>
</dbReference>
<dbReference type="InterPro" id="IPR002123">
    <property type="entry name" value="Plipid/glycerol_acylTrfase"/>
</dbReference>
<dbReference type="NCBIfam" id="TIGR03703">
    <property type="entry name" value="plsB"/>
    <property type="match status" value="1"/>
</dbReference>
<dbReference type="NCBIfam" id="NF003441">
    <property type="entry name" value="PRK04974.1"/>
    <property type="match status" value="1"/>
</dbReference>
<dbReference type="PANTHER" id="PTHR12563:SF17">
    <property type="entry name" value="DIHYDROXYACETONE PHOSPHATE ACYLTRANSFERASE"/>
    <property type="match status" value="1"/>
</dbReference>
<dbReference type="PANTHER" id="PTHR12563">
    <property type="entry name" value="GLYCEROL-3-PHOSPHATE ACYLTRANSFERASE"/>
    <property type="match status" value="1"/>
</dbReference>
<dbReference type="Pfam" id="PF01553">
    <property type="entry name" value="Acyltransferase"/>
    <property type="match status" value="1"/>
</dbReference>
<dbReference type="Pfam" id="PF19277">
    <property type="entry name" value="GPAT_C"/>
    <property type="match status" value="1"/>
</dbReference>
<dbReference type="PIRSF" id="PIRSF500064">
    <property type="entry name" value="GPAT"/>
    <property type="match status" value="1"/>
</dbReference>
<dbReference type="PIRSF" id="PIRSF000437">
    <property type="entry name" value="GPAT_DHAPAT"/>
    <property type="match status" value="1"/>
</dbReference>
<dbReference type="SMART" id="SM00563">
    <property type="entry name" value="PlsC"/>
    <property type="match status" value="1"/>
</dbReference>
<dbReference type="SUPFAM" id="SSF69593">
    <property type="entry name" value="Glycerol-3-phosphate (1)-acyltransferase"/>
    <property type="match status" value="1"/>
</dbReference>
<name>PLSB_SHEB2</name>
<proteinExistence type="inferred from homology"/>
<protein>
    <recommendedName>
        <fullName evidence="1">Glycerol-3-phosphate acyltransferase</fullName>
        <shortName evidence="1">GPAT</shortName>
        <ecNumber evidence="1">2.3.1.15</ecNumber>
    </recommendedName>
</protein>
<organism>
    <name type="scientific">Shewanella baltica (strain OS223)</name>
    <dbReference type="NCBI Taxonomy" id="407976"/>
    <lineage>
        <taxon>Bacteria</taxon>
        <taxon>Pseudomonadati</taxon>
        <taxon>Pseudomonadota</taxon>
        <taxon>Gammaproteobacteria</taxon>
        <taxon>Alteromonadales</taxon>
        <taxon>Shewanellaceae</taxon>
        <taxon>Shewanella</taxon>
    </lineage>
</organism>
<evidence type="ECO:0000255" key="1">
    <source>
        <dbReference type="HAMAP-Rule" id="MF_00393"/>
    </source>
</evidence>